<gene>
    <name type="primary">ints4</name>
</gene>
<protein>
    <recommendedName>
        <fullName>Integrator complex subunit 4</fullName>
        <shortName>Int4</shortName>
    </recommendedName>
</protein>
<organism>
    <name type="scientific">Xenopus laevis</name>
    <name type="common">African clawed frog</name>
    <dbReference type="NCBI Taxonomy" id="8355"/>
    <lineage>
        <taxon>Eukaryota</taxon>
        <taxon>Metazoa</taxon>
        <taxon>Chordata</taxon>
        <taxon>Craniata</taxon>
        <taxon>Vertebrata</taxon>
        <taxon>Euteleostomi</taxon>
        <taxon>Amphibia</taxon>
        <taxon>Batrachia</taxon>
        <taxon>Anura</taxon>
        <taxon>Pipoidea</taxon>
        <taxon>Pipidae</taxon>
        <taxon>Xenopodinae</taxon>
        <taxon>Xenopus</taxon>
        <taxon>Xenopus</taxon>
    </lineage>
</organism>
<proteinExistence type="evidence at transcript level"/>
<comment type="function">
    <text evidence="1">Component of the integrator complex, a multiprotein complex that terminates RNA polymerase II (Pol II) transcription in the promoter-proximal region of genes. The integrator complex provides a quality checkpoint during transcription elongation by driving premature transcription termination of transcripts that are unfavorably configured for transcriptional elongation: the complex terminates transcription by (1) catalyzing dephosphorylation of the C-terminal domain (CTD) of Pol II subunit POLR2A/RPB1 and SUPT5H/SPT5, (2) degrading the exiting nascent RNA transcript via endonuclease activity and (3) promoting the release of Pol II from bound DNA. The integrator complex is also involved in terminating the synthesis of non-coding Pol II transcripts, such as enhancer RNAs (eRNAs), small nuclear RNAs (snRNAs), telomerase RNAs and long non-coding RNAs (lncRNAs).</text>
</comment>
<comment type="subunit">
    <text evidence="1">Component of the Integrator complex, composed of core subunits INTS1, INTS2, INTS3, INTS4, INTS5, INTS6, INTS7, INTS8, INTS9/RC74, INTS10, INTS11/CPSF3L, INTS12, INTS13, INTS14 and INTS15. The core complex associates with protein phosphatase 2A subunits PPP2CA and PPP2R1A, to form the Integrator-PP2A (INTAC) complex. INTS4 is part of the RNA endonuclease subcomplex, composed of INTS4, INTS9, INTS11 and inositol hexakisphosphate (InsP6).</text>
</comment>
<comment type="subcellular location">
    <subcellularLocation>
        <location evidence="1">Nucleus</location>
    </subcellularLocation>
    <subcellularLocation>
        <location evidence="1">Cytoplasm</location>
    </subcellularLocation>
</comment>
<comment type="similarity">
    <text evidence="3">Belongs to the Integrator subunit 4 family.</text>
</comment>
<name>INT4_XENLA</name>
<accession>Q68F70</accession>
<evidence type="ECO:0000250" key="1">
    <source>
        <dbReference type="UniProtKB" id="Q96HW7"/>
    </source>
</evidence>
<evidence type="ECO:0000256" key="2">
    <source>
        <dbReference type="SAM" id="MobiDB-lite"/>
    </source>
</evidence>
<evidence type="ECO:0000305" key="3"/>
<reference key="1">
    <citation type="submission" date="2004-08" db="EMBL/GenBank/DDBJ databases">
        <authorList>
            <consortium name="NIH - Xenopus Gene Collection (XGC) project"/>
        </authorList>
    </citation>
    <scope>NUCLEOTIDE SEQUENCE [LARGE SCALE MRNA]</scope>
    <source>
        <tissue>Embryo</tissue>
    </source>
</reference>
<dbReference type="EMBL" id="BC079973">
    <property type="protein sequence ID" value="AAH79973.1"/>
    <property type="molecule type" value="mRNA"/>
</dbReference>
<dbReference type="RefSeq" id="NP_001087469.1">
    <property type="nucleotide sequence ID" value="NM_001094000.1"/>
</dbReference>
<dbReference type="SMR" id="Q68F70"/>
<dbReference type="BioGRID" id="104153">
    <property type="interactions" value="1"/>
</dbReference>
<dbReference type="DNASU" id="447293"/>
<dbReference type="GeneID" id="447293"/>
<dbReference type="KEGG" id="xla:447293"/>
<dbReference type="AGR" id="Xenbase:XB-GENE-5841134"/>
<dbReference type="CTD" id="447293"/>
<dbReference type="Xenbase" id="XB-GENE-5841134">
    <property type="gene designation" value="ints4.L"/>
</dbReference>
<dbReference type="OrthoDB" id="18190at2759"/>
<dbReference type="Proteomes" id="UP000186698">
    <property type="component" value="Chromosome 2L"/>
</dbReference>
<dbReference type="Bgee" id="447293">
    <property type="expression patterns" value="Expressed in ovary and 19 other cell types or tissues"/>
</dbReference>
<dbReference type="GO" id="GO:0005737">
    <property type="term" value="C:cytoplasm"/>
    <property type="evidence" value="ECO:0000250"/>
    <property type="project" value="UniProtKB"/>
</dbReference>
<dbReference type="GO" id="GO:0160232">
    <property type="term" value="C:INTAC complex"/>
    <property type="evidence" value="ECO:0000250"/>
    <property type="project" value="UniProtKB"/>
</dbReference>
<dbReference type="GO" id="GO:0032039">
    <property type="term" value="C:integrator complex"/>
    <property type="evidence" value="ECO:0000250"/>
    <property type="project" value="UniProtKB"/>
</dbReference>
<dbReference type="GO" id="GO:0005634">
    <property type="term" value="C:nucleus"/>
    <property type="evidence" value="ECO:0000250"/>
    <property type="project" value="UniProtKB"/>
</dbReference>
<dbReference type="GO" id="GO:0030674">
    <property type="term" value="F:protein-macromolecule adaptor activity"/>
    <property type="evidence" value="ECO:0000250"/>
    <property type="project" value="UniProtKB"/>
</dbReference>
<dbReference type="GO" id="GO:0160240">
    <property type="term" value="P:RNA polymerase II transcription initiation surveillance"/>
    <property type="evidence" value="ECO:0000250"/>
    <property type="project" value="UniProtKB"/>
</dbReference>
<dbReference type="GO" id="GO:0016180">
    <property type="term" value="P:snRNA processing"/>
    <property type="evidence" value="ECO:0000318"/>
    <property type="project" value="GO_Central"/>
</dbReference>
<dbReference type="FunFam" id="1.25.10.10:FF:000118">
    <property type="entry name" value="Integrator complex subunit 4"/>
    <property type="match status" value="1"/>
</dbReference>
<dbReference type="FunFam" id="1.25.10.10:FF:000119">
    <property type="entry name" value="Integrator complex subunit 4"/>
    <property type="match status" value="1"/>
</dbReference>
<dbReference type="FunFam" id="1.25.10.10:FF:000134">
    <property type="entry name" value="Integrator complex subunit 4"/>
    <property type="match status" value="1"/>
</dbReference>
<dbReference type="Gene3D" id="1.25.10.10">
    <property type="entry name" value="Leucine-rich Repeat Variant"/>
    <property type="match status" value="3"/>
</dbReference>
<dbReference type="InterPro" id="IPR011989">
    <property type="entry name" value="ARM-like"/>
</dbReference>
<dbReference type="InterPro" id="IPR016024">
    <property type="entry name" value="ARM-type_fold"/>
</dbReference>
<dbReference type="InterPro" id="IPR056235">
    <property type="entry name" value="INTS4_8HBD"/>
</dbReference>
<dbReference type="PANTHER" id="PTHR20938">
    <property type="entry name" value="INTEGRATOR COMPLEX SUBUNIT 4"/>
    <property type="match status" value="1"/>
</dbReference>
<dbReference type="PANTHER" id="PTHR20938:SF0">
    <property type="entry name" value="INTEGRATOR COMPLEX SUBUNIT 4"/>
    <property type="match status" value="1"/>
</dbReference>
<dbReference type="Pfam" id="PF13646">
    <property type="entry name" value="HEAT_2"/>
    <property type="match status" value="1"/>
</dbReference>
<dbReference type="Pfam" id="PF24493">
    <property type="entry name" value="INTS4_8HBD"/>
    <property type="match status" value="1"/>
</dbReference>
<dbReference type="Pfam" id="PF25458">
    <property type="entry name" value="INTS4_C"/>
    <property type="match status" value="1"/>
</dbReference>
<dbReference type="Pfam" id="PF20168">
    <property type="entry name" value="PDS5"/>
    <property type="match status" value="1"/>
</dbReference>
<dbReference type="SUPFAM" id="SSF48371">
    <property type="entry name" value="ARM repeat"/>
    <property type="match status" value="1"/>
</dbReference>
<keyword id="KW-0963">Cytoplasm</keyword>
<keyword id="KW-0539">Nucleus</keyword>
<keyword id="KW-1185">Reference proteome</keyword>
<keyword id="KW-0677">Repeat</keyword>
<feature type="chain" id="PRO_0000259540" description="Integrator complex subunit 4">
    <location>
        <begin position="1"/>
        <end position="969"/>
    </location>
</feature>
<feature type="repeat" description="HEAT 1">
    <location>
        <begin position="68"/>
        <end position="107"/>
    </location>
</feature>
<feature type="repeat" description="HEAT 2">
    <location>
        <begin position="147"/>
        <end position="185"/>
    </location>
</feature>
<feature type="repeat" description="HEAT 3">
    <location>
        <begin position="192"/>
        <end position="230"/>
    </location>
</feature>
<feature type="repeat" description="HEAT 4">
    <location>
        <begin position="231"/>
        <end position="265"/>
    </location>
</feature>
<feature type="repeat" description="HEAT 5">
    <location>
        <begin position="279"/>
        <end position="315"/>
    </location>
</feature>
<feature type="repeat" description="HEAT 6">
    <location>
        <begin position="371"/>
        <end position="407"/>
    </location>
</feature>
<feature type="repeat" description="HEAT 7">
    <location>
        <begin position="408"/>
        <end position="446"/>
    </location>
</feature>
<feature type="repeat" description="HEAT 8">
    <location>
        <begin position="448"/>
        <end position="486"/>
    </location>
</feature>
<feature type="region of interest" description="Disordered" evidence="2">
    <location>
        <begin position="928"/>
        <end position="950"/>
    </location>
</feature>
<feature type="compositionally biased region" description="Low complexity" evidence="2">
    <location>
        <begin position="928"/>
        <end position="949"/>
    </location>
</feature>
<sequence length="969" mass="109256">MAAHLKKRVYEEFTRVVQQQPLEEPSAKKLRLTKPSKSAALHIDLCKATSPADALQYLLQFARKPVEAESVEGVVRILLEHYYKENDTSVRLKIASLLGLLSKTAGFCPDSIVDDVINTLQNEKSHQVLAQLLDTLLEIGLKLLDIVSHRMRLVDVACKHLSDTSHGVRNKCLQLLGCLGSVEASPAKEVENAVAKDVQKIIGDYFIDQDPRVRTAAIKAMLQLHERGLKLQQAMYNQACKLLTDDYEQVRSAAVELSWVLSQLYSESIVPIPSSNEEIRLVDDAFGKVCHMVSDGSWVVRVQACKLLGSMLQVSPHFLEQTLDKKLMSDLRRKRTAHERAKELYSSGEFSSGRKWGDDAPKEELDTGAVNLIDSGACGAFVHGLEDEMYEVRIAAVESLCLLARSSAPFAEKCLDFLVDMFNDEIEEVRLQSIHTMRKISDNITLREDQLDTVLAVLEDKSRDIREALHELLCCTNVSTKECIQLALVELLKNLSKYPTDRESIWKCLKFLGSRHPTLVLSLVPELLSTHPFFDTPEPDMDDPAYIAVLVLIFNAAKCCPTMPALFSDHTFRHYTYLRDSLSHLVPALNLPSVRWSWIPDVITEAPPEDPSQQFLQLSLERVHNLQHLGSQGTQELLEFTIRDLQRIGELQSDLAGMADFSATYLRCHLLLTKALNEKLWNLAAPLFLKNSLTTNAVKQILEETYKMEFMYSGLETRQVAIIHHMRLQAKALQLLVTARTTKGAEPLFGMCEEFLQEVDFFQRCFISELPHMQDSFVDKLLDLVPRLVNSKPLEMVKILQTTLRQCTFLRLTLPEQIHRASSHIIEPAEESDNPIRFTSGLVVALDVDATLEHVQEPQSTVKVQVVYPDGQVQIIHPKPADFRNPGPGRHRLITQVYLSHTAWTEPCQIEVRLLLAYSSSRSKVMSRASNSTWGESTETVPSTESSTEGTIPFSKPVKVFLMPKPARR</sequence>